<keyword id="KW-0150">Chloroplast</keyword>
<keyword id="KW-0934">Plastid</keyword>
<keyword id="KW-0687">Ribonucleoprotein</keyword>
<keyword id="KW-0689">Ribosomal protein</keyword>
<evidence type="ECO:0000250" key="1"/>
<evidence type="ECO:0000255" key="2">
    <source>
        <dbReference type="HAMAP-Rule" id="MF_01320"/>
    </source>
</evidence>
<evidence type="ECO:0000256" key="3">
    <source>
        <dbReference type="SAM" id="MobiDB-lite"/>
    </source>
</evidence>
<evidence type="ECO:0000305" key="4"/>
<geneLocation type="chloroplast"/>
<feature type="chain" id="PRO_0000310065" description="Large ribosomal subunit protein uL2cz/uL2cy">
    <location>
        <begin position="1"/>
        <end position="274"/>
    </location>
</feature>
<feature type="region of interest" description="Disordered" evidence="3">
    <location>
        <begin position="1"/>
        <end position="22"/>
    </location>
</feature>
<feature type="region of interest" description="Disordered" evidence="3">
    <location>
        <begin position="225"/>
        <end position="252"/>
    </location>
</feature>
<reference key="1">
    <citation type="submission" date="2007-03" db="EMBL/GenBank/DDBJ databases">
        <title>Sequencing analysis of Barbarea verna chloroplast DNA.</title>
        <authorList>
            <person name="Hosouchi T."/>
            <person name="Tsuruoka H."/>
            <person name="Kotani H."/>
        </authorList>
    </citation>
    <scope>NUCLEOTIDE SEQUENCE [LARGE SCALE GENOMIC DNA]</scope>
</reference>
<accession>A4QKE6</accession>
<sequence length="274" mass="29943">MAIHLYKTSTPSTRNGAVDSQVKSNPRNNLIYGQHHCGKGRNARGIITVRHRGGGHKRLYRKIDFRRNAKDIYGRIVTIEYDPNRNAYICLIHYGDGEKRYILHPRGAIIGDTIVSGTEVPIKMGNALPLTDMPLGTAIHNIEITLGKGGQLARAAGAVAKLIAKEGKSATLKLPSGEVRLISKNCSATVGQVGNVGVNQKSLGRAGSKCWLGKRPVVRGVVMNPVDHPHGGGEGRAPIGRKKPVTPWGYPALGRRTRKRKKYSETMILRRRSK</sequence>
<dbReference type="EMBL" id="AP009370">
    <property type="protein sequence ID" value="BAF50151.1"/>
    <property type="molecule type" value="Genomic_DNA"/>
</dbReference>
<dbReference type="EMBL" id="AP009370">
    <property type="protein sequence ID" value="BAF50176.1"/>
    <property type="molecule type" value="Genomic_DNA"/>
</dbReference>
<dbReference type="SMR" id="A4QKE6"/>
<dbReference type="GO" id="GO:0009507">
    <property type="term" value="C:chloroplast"/>
    <property type="evidence" value="ECO:0007669"/>
    <property type="project" value="UniProtKB-SubCell"/>
</dbReference>
<dbReference type="GO" id="GO:0005762">
    <property type="term" value="C:mitochondrial large ribosomal subunit"/>
    <property type="evidence" value="ECO:0007669"/>
    <property type="project" value="TreeGrafter"/>
</dbReference>
<dbReference type="GO" id="GO:0019843">
    <property type="term" value="F:rRNA binding"/>
    <property type="evidence" value="ECO:0007669"/>
    <property type="project" value="UniProtKB-UniRule"/>
</dbReference>
<dbReference type="GO" id="GO:0003735">
    <property type="term" value="F:structural constituent of ribosome"/>
    <property type="evidence" value="ECO:0007669"/>
    <property type="project" value="InterPro"/>
</dbReference>
<dbReference type="GO" id="GO:0016740">
    <property type="term" value="F:transferase activity"/>
    <property type="evidence" value="ECO:0007669"/>
    <property type="project" value="InterPro"/>
</dbReference>
<dbReference type="GO" id="GO:0032543">
    <property type="term" value="P:mitochondrial translation"/>
    <property type="evidence" value="ECO:0007669"/>
    <property type="project" value="TreeGrafter"/>
</dbReference>
<dbReference type="FunFam" id="4.10.950.10:FF:000001">
    <property type="entry name" value="50S ribosomal protein L2"/>
    <property type="match status" value="1"/>
</dbReference>
<dbReference type="FunFam" id="2.30.30.30:FF:000008">
    <property type="entry name" value="50S ribosomal protein L2, chloroplastic"/>
    <property type="match status" value="1"/>
</dbReference>
<dbReference type="FunFam" id="2.40.50.140:FF:000029">
    <property type="entry name" value="50S ribosomal protein L2, chloroplastic"/>
    <property type="match status" value="1"/>
</dbReference>
<dbReference type="Gene3D" id="2.30.30.30">
    <property type="match status" value="1"/>
</dbReference>
<dbReference type="Gene3D" id="2.40.50.140">
    <property type="entry name" value="Nucleic acid-binding proteins"/>
    <property type="match status" value="1"/>
</dbReference>
<dbReference type="Gene3D" id="4.10.950.10">
    <property type="entry name" value="Ribosomal protein L2, domain 3"/>
    <property type="match status" value="1"/>
</dbReference>
<dbReference type="HAMAP" id="MF_01320_B">
    <property type="entry name" value="Ribosomal_uL2_B"/>
    <property type="match status" value="1"/>
</dbReference>
<dbReference type="InterPro" id="IPR012340">
    <property type="entry name" value="NA-bd_OB-fold"/>
</dbReference>
<dbReference type="InterPro" id="IPR014722">
    <property type="entry name" value="Rib_uL2_dom2"/>
</dbReference>
<dbReference type="InterPro" id="IPR002171">
    <property type="entry name" value="Ribosomal_uL2"/>
</dbReference>
<dbReference type="InterPro" id="IPR005880">
    <property type="entry name" value="Ribosomal_uL2_bac/org-type"/>
</dbReference>
<dbReference type="InterPro" id="IPR022669">
    <property type="entry name" value="Ribosomal_uL2_C"/>
</dbReference>
<dbReference type="InterPro" id="IPR022671">
    <property type="entry name" value="Ribosomal_uL2_CS"/>
</dbReference>
<dbReference type="InterPro" id="IPR014726">
    <property type="entry name" value="Ribosomal_uL2_dom3"/>
</dbReference>
<dbReference type="InterPro" id="IPR022666">
    <property type="entry name" value="Ribosomal_uL2_RNA-bd_dom"/>
</dbReference>
<dbReference type="InterPro" id="IPR008991">
    <property type="entry name" value="Translation_prot_SH3-like_sf"/>
</dbReference>
<dbReference type="NCBIfam" id="TIGR01171">
    <property type="entry name" value="rplB_bact"/>
    <property type="match status" value="1"/>
</dbReference>
<dbReference type="PANTHER" id="PTHR13691:SF5">
    <property type="entry name" value="LARGE RIBOSOMAL SUBUNIT PROTEIN UL2M"/>
    <property type="match status" value="1"/>
</dbReference>
<dbReference type="PANTHER" id="PTHR13691">
    <property type="entry name" value="RIBOSOMAL PROTEIN L2"/>
    <property type="match status" value="1"/>
</dbReference>
<dbReference type="Pfam" id="PF00181">
    <property type="entry name" value="Ribosomal_L2"/>
    <property type="match status" value="1"/>
</dbReference>
<dbReference type="Pfam" id="PF03947">
    <property type="entry name" value="Ribosomal_L2_C"/>
    <property type="match status" value="1"/>
</dbReference>
<dbReference type="PIRSF" id="PIRSF002158">
    <property type="entry name" value="Ribosomal_L2"/>
    <property type="match status" value="1"/>
</dbReference>
<dbReference type="SMART" id="SM01383">
    <property type="entry name" value="Ribosomal_L2"/>
    <property type="match status" value="1"/>
</dbReference>
<dbReference type="SMART" id="SM01382">
    <property type="entry name" value="Ribosomal_L2_C"/>
    <property type="match status" value="1"/>
</dbReference>
<dbReference type="SUPFAM" id="SSF50249">
    <property type="entry name" value="Nucleic acid-binding proteins"/>
    <property type="match status" value="1"/>
</dbReference>
<dbReference type="SUPFAM" id="SSF50104">
    <property type="entry name" value="Translation proteins SH3-like domain"/>
    <property type="match status" value="1"/>
</dbReference>
<dbReference type="PROSITE" id="PS00467">
    <property type="entry name" value="RIBOSOMAL_L2"/>
    <property type="match status" value="1"/>
</dbReference>
<name>RK2_BARVE</name>
<proteinExistence type="inferred from homology"/>
<organism>
    <name type="scientific">Barbarea verna</name>
    <name type="common">Land cress</name>
    <name type="synonym">Erysimum vernum</name>
    <dbReference type="NCBI Taxonomy" id="50458"/>
    <lineage>
        <taxon>Eukaryota</taxon>
        <taxon>Viridiplantae</taxon>
        <taxon>Streptophyta</taxon>
        <taxon>Embryophyta</taxon>
        <taxon>Tracheophyta</taxon>
        <taxon>Spermatophyta</taxon>
        <taxon>Magnoliopsida</taxon>
        <taxon>eudicotyledons</taxon>
        <taxon>Gunneridae</taxon>
        <taxon>Pentapetalae</taxon>
        <taxon>rosids</taxon>
        <taxon>malvids</taxon>
        <taxon>Brassicales</taxon>
        <taxon>Brassicaceae</taxon>
        <taxon>Cardamineae</taxon>
        <taxon>Barbarea</taxon>
    </lineage>
</organism>
<protein>
    <recommendedName>
        <fullName evidence="2">Large ribosomal subunit protein uL2cz/uL2cy</fullName>
    </recommendedName>
    <alternativeName>
        <fullName evidence="4">50S ribosomal protein L2, chloroplastic</fullName>
    </alternativeName>
</protein>
<comment type="subunit">
    <text evidence="1">Part of the 50S ribosomal subunit.</text>
</comment>
<comment type="subcellular location">
    <subcellularLocation>
        <location>Plastid</location>
        <location>Chloroplast</location>
    </subcellularLocation>
</comment>
<comment type="similarity">
    <text evidence="4">Belongs to the universal ribosomal protein uL2 family.</text>
</comment>
<gene>
    <name type="primary">rpl2-A</name>
</gene>
<gene>
    <name type="primary">rpl2-B</name>
</gene>